<accession>C5DCN9</accession>
<reference key="1">
    <citation type="journal article" date="2009" name="Genome Res.">
        <title>Comparative genomics of protoploid Saccharomycetaceae.</title>
        <authorList>
            <consortium name="The Genolevures Consortium"/>
            <person name="Souciet J.-L."/>
            <person name="Dujon B."/>
            <person name="Gaillardin C."/>
            <person name="Johnston M."/>
            <person name="Baret P.V."/>
            <person name="Cliften P."/>
            <person name="Sherman D.J."/>
            <person name="Weissenbach J."/>
            <person name="Westhof E."/>
            <person name="Wincker P."/>
            <person name="Jubin C."/>
            <person name="Poulain J."/>
            <person name="Barbe V."/>
            <person name="Segurens B."/>
            <person name="Artiguenave F."/>
            <person name="Anthouard V."/>
            <person name="Vacherie B."/>
            <person name="Val M.-E."/>
            <person name="Fulton R.S."/>
            <person name="Minx P."/>
            <person name="Wilson R."/>
            <person name="Durrens P."/>
            <person name="Jean G."/>
            <person name="Marck C."/>
            <person name="Martin T."/>
            <person name="Nikolski M."/>
            <person name="Rolland T."/>
            <person name="Seret M.-L."/>
            <person name="Casaregola S."/>
            <person name="Despons L."/>
            <person name="Fairhead C."/>
            <person name="Fischer G."/>
            <person name="Lafontaine I."/>
            <person name="Leh V."/>
            <person name="Lemaire M."/>
            <person name="de Montigny J."/>
            <person name="Neuveglise C."/>
            <person name="Thierry A."/>
            <person name="Blanc-Lenfle I."/>
            <person name="Bleykasten C."/>
            <person name="Diffels J."/>
            <person name="Fritsch E."/>
            <person name="Frangeul L."/>
            <person name="Goeffon A."/>
            <person name="Jauniaux N."/>
            <person name="Kachouri-Lafond R."/>
            <person name="Payen C."/>
            <person name="Potier S."/>
            <person name="Pribylova L."/>
            <person name="Ozanne C."/>
            <person name="Richard G.-F."/>
            <person name="Sacerdot C."/>
            <person name="Straub M.-L."/>
            <person name="Talla E."/>
        </authorList>
    </citation>
    <scope>NUCLEOTIDE SEQUENCE [LARGE SCALE GENOMIC DNA]</scope>
    <source>
        <strain>ATCC 56472 / CBS 6340 / NRRL Y-8284</strain>
    </source>
</reference>
<name>AEP1_LACTC</name>
<evidence type="ECO:0000250" key="1"/>
<evidence type="ECO:0000255" key="2"/>
<evidence type="ECO:0000305" key="3"/>
<gene>
    <name type="primary">AEP1</name>
    <name type="ordered locus">KLTH0B04620g</name>
</gene>
<comment type="function">
    <text evidence="1">Required for translation of the mitochondrial OLI1 transcript encoding subunit 9 of mitochondrial ATP synthase.</text>
</comment>
<comment type="subcellular location">
    <subcellularLocation>
        <location evidence="1">Mitochondrion</location>
    </subcellularLocation>
</comment>
<comment type="similarity">
    <text evidence="3">Belongs to the AEP1 family.</text>
</comment>
<keyword id="KW-0496">Mitochondrion</keyword>
<keyword id="KW-1185">Reference proteome</keyword>
<keyword id="KW-0809">Transit peptide</keyword>
<keyword id="KW-0810">Translation regulation</keyword>
<dbReference type="EMBL" id="CU928166">
    <property type="protein sequence ID" value="CAR21550.1"/>
    <property type="molecule type" value="Genomic_DNA"/>
</dbReference>
<dbReference type="RefSeq" id="XP_002551988.1">
    <property type="nucleotide sequence ID" value="XM_002551942.1"/>
</dbReference>
<dbReference type="FunCoup" id="C5DCN9">
    <property type="interactions" value="173"/>
</dbReference>
<dbReference type="GeneID" id="8290825"/>
<dbReference type="KEGG" id="lth:KLTH0B04620g"/>
<dbReference type="eggNOG" id="ENOG502RXUX">
    <property type="taxonomic scope" value="Eukaryota"/>
</dbReference>
<dbReference type="HOGENOM" id="CLU_035453_0_0_1"/>
<dbReference type="InParanoid" id="C5DCN9"/>
<dbReference type="OMA" id="CKVEANE"/>
<dbReference type="OrthoDB" id="4064791at2759"/>
<dbReference type="Proteomes" id="UP000002036">
    <property type="component" value="Chromosome B"/>
</dbReference>
<dbReference type="GO" id="GO:0005739">
    <property type="term" value="C:mitochondrion"/>
    <property type="evidence" value="ECO:0007669"/>
    <property type="project" value="UniProtKB-SubCell"/>
</dbReference>
<dbReference type="GO" id="GO:0045182">
    <property type="term" value="F:translation regulator activity"/>
    <property type="evidence" value="ECO:0007669"/>
    <property type="project" value="InterPro"/>
</dbReference>
<dbReference type="InterPro" id="IPR031467">
    <property type="entry name" value="Aep1"/>
</dbReference>
<dbReference type="Pfam" id="PF17049">
    <property type="entry name" value="AEP1"/>
    <property type="match status" value="1"/>
</dbReference>
<organism>
    <name type="scientific">Lachancea thermotolerans (strain ATCC 56472 / CBS 6340 / NRRL Y-8284)</name>
    <name type="common">Yeast</name>
    <name type="synonym">Kluyveromyces thermotolerans</name>
    <dbReference type="NCBI Taxonomy" id="559295"/>
    <lineage>
        <taxon>Eukaryota</taxon>
        <taxon>Fungi</taxon>
        <taxon>Dikarya</taxon>
        <taxon>Ascomycota</taxon>
        <taxon>Saccharomycotina</taxon>
        <taxon>Saccharomycetes</taxon>
        <taxon>Saccharomycetales</taxon>
        <taxon>Saccharomycetaceae</taxon>
        <taxon>Lachancea</taxon>
    </lineage>
</organism>
<protein>
    <recommendedName>
        <fullName>ATPase expression protein 1, mitochondrial</fullName>
    </recommendedName>
</protein>
<proteinExistence type="inferred from homology"/>
<feature type="transit peptide" description="Mitochondrion" evidence="2">
    <location>
        <begin position="1"/>
        <end position="13"/>
    </location>
</feature>
<feature type="chain" id="PRO_0000405604" description="ATPase expression protein 1, mitochondrial">
    <location>
        <begin position="14"/>
        <end position="566"/>
    </location>
</feature>
<sequence length="566" mass="63976">MGSRIFSPRRLYSALSELKTETVIPKNPNKRTRDGSFRKFKRVAPAIGDSMHPFYSPNIMERAILCASEIKPELLDGQPIVPAVIKQLKTLEPALVNTRWQPQSTQGLNDWLEPFRKMRRKSSPLKLIENHEIDNVIRPSRIDSGRIPELRKFALMFEKEDAGILSASTIGSLIDRLAADQEKAVFSEEVFLYILQHYCKSSQGIASVVDSITEFLHKDIDDLKTAETLLAHVLMALRRNSIPLTPRATSAILKLIDSVSTRFHRPFCVVDFSPAVVQMTTEFYVDSGFLKESKVLFTDMVNKERCPSAQLVEKYLGLIESVCGISTSDNDFLKKFVYISNFRPIFQTTMTPRITEFLVSYCRHFDEILSLLVLVDHSKVKKQIWDLVLPQMIRRVSLLTKDSAKNCCHLTVLYQKASRFYGMPLSTKVNKAFIIQYAVNGNFAMVARLLSIIDSNAFPSFYASVLAAYDQSSAFSMEVPSSGAALKNKHQFMTSMIIPHYTEISFVGRQLALKHADTEELLEQVLKAEIAIKGRGGKSLLPQVSLKAQDCKSNYIITEAEKCLQH</sequence>